<feature type="chain" id="PRO_0000316668" description="Putative pyruvate, phosphate dikinase regulatory protein">
    <location>
        <begin position="1"/>
        <end position="273"/>
    </location>
</feature>
<feature type="binding site" evidence="1">
    <location>
        <begin position="153"/>
        <end position="160"/>
    </location>
    <ligand>
        <name>ADP</name>
        <dbReference type="ChEBI" id="CHEBI:456216"/>
    </ligand>
</feature>
<reference key="1">
    <citation type="journal article" date="2006" name="PLoS Genet.">
        <title>Comparative genomics of emerging human ehrlichiosis agents.</title>
        <authorList>
            <person name="Dunning Hotopp J.C."/>
            <person name="Lin M."/>
            <person name="Madupu R."/>
            <person name="Crabtree J."/>
            <person name="Angiuoli S.V."/>
            <person name="Eisen J.A."/>
            <person name="Seshadri R."/>
            <person name="Ren Q."/>
            <person name="Wu M."/>
            <person name="Utterback T.R."/>
            <person name="Smith S."/>
            <person name="Lewis M."/>
            <person name="Khouri H."/>
            <person name="Zhang C."/>
            <person name="Niu H."/>
            <person name="Lin Q."/>
            <person name="Ohashi N."/>
            <person name="Zhi N."/>
            <person name="Nelson W.C."/>
            <person name="Brinkac L.M."/>
            <person name="Dodson R.J."/>
            <person name="Rosovitz M.J."/>
            <person name="Sundaram J.P."/>
            <person name="Daugherty S.C."/>
            <person name="Davidsen T."/>
            <person name="Durkin A.S."/>
            <person name="Gwinn M.L."/>
            <person name="Haft D.H."/>
            <person name="Selengut J.D."/>
            <person name="Sullivan S.A."/>
            <person name="Zafar N."/>
            <person name="Zhou L."/>
            <person name="Benahmed F."/>
            <person name="Forberger H."/>
            <person name="Halpin R."/>
            <person name="Mulligan S."/>
            <person name="Robinson J."/>
            <person name="White O."/>
            <person name="Rikihisa Y."/>
            <person name="Tettelin H."/>
        </authorList>
    </citation>
    <scope>NUCLEOTIDE SEQUENCE [LARGE SCALE GENOMIC DNA]</scope>
    <source>
        <strain>ATCC CRL-10679 / Arkansas</strain>
    </source>
</reference>
<accession>Q2GFU3</accession>
<dbReference type="EC" id="2.7.11.32" evidence="1"/>
<dbReference type="EC" id="2.7.4.27" evidence="1"/>
<dbReference type="EMBL" id="CP000236">
    <property type="protein sequence ID" value="ABD45194.1"/>
    <property type="molecule type" value="Genomic_DNA"/>
</dbReference>
<dbReference type="RefSeq" id="WP_006010485.1">
    <property type="nucleotide sequence ID" value="NC_007799.1"/>
</dbReference>
<dbReference type="SMR" id="Q2GFU3"/>
<dbReference type="STRING" id="205920.ECH_0895"/>
<dbReference type="KEGG" id="ech:ECH_0895"/>
<dbReference type="eggNOG" id="COG1806">
    <property type="taxonomic scope" value="Bacteria"/>
</dbReference>
<dbReference type="HOGENOM" id="CLU_046206_2_0_5"/>
<dbReference type="OrthoDB" id="9782201at2"/>
<dbReference type="Proteomes" id="UP000008320">
    <property type="component" value="Chromosome"/>
</dbReference>
<dbReference type="GO" id="GO:0043531">
    <property type="term" value="F:ADP binding"/>
    <property type="evidence" value="ECO:0007669"/>
    <property type="project" value="UniProtKB-UniRule"/>
</dbReference>
<dbReference type="GO" id="GO:0005524">
    <property type="term" value="F:ATP binding"/>
    <property type="evidence" value="ECO:0007669"/>
    <property type="project" value="InterPro"/>
</dbReference>
<dbReference type="GO" id="GO:0016776">
    <property type="term" value="F:phosphotransferase activity, phosphate group as acceptor"/>
    <property type="evidence" value="ECO:0007669"/>
    <property type="project" value="UniProtKB-UniRule"/>
</dbReference>
<dbReference type="GO" id="GO:0004674">
    <property type="term" value="F:protein serine/threonine kinase activity"/>
    <property type="evidence" value="ECO:0007669"/>
    <property type="project" value="UniProtKB-UniRule"/>
</dbReference>
<dbReference type="HAMAP" id="MF_00921">
    <property type="entry name" value="PDRP"/>
    <property type="match status" value="1"/>
</dbReference>
<dbReference type="InterPro" id="IPR005177">
    <property type="entry name" value="Kinase-pyrophosphorylase"/>
</dbReference>
<dbReference type="InterPro" id="IPR026565">
    <property type="entry name" value="PPDK_reg"/>
</dbReference>
<dbReference type="NCBIfam" id="NF003742">
    <property type="entry name" value="PRK05339.1"/>
    <property type="match status" value="1"/>
</dbReference>
<dbReference type="PANTHER" id="PTHR31756">
    <property type="entry name" value="PYRUVATE, PHOSPHATE DIKINASE REGULATORY PROTEIN 1, CHLOROPLASTIC"/>
    <property type="match status" value="1"/>
</dbReference>
<dbReference type="PANTHER" id="PTHR31756:SF3">
    <property type="entry name" value="PYRUVATE, PHOSPHATE DIKINASE REGULATORY PROTEIN 1, CHLOROPLASTIC"/>
    <property type="match status" value="1"/>
</dbReference>
<dbReference type="Pfam" id="PF03618">
    <property type="entry name" value="Kinase-PPPase"/>
    <property type="match status" value="1"/>
</dbReference>
<sequence length="273" mass="31704">MSTSVTLNLHLISDSTCETVASVARSALEHFRSVEVNEFVWSFINNNEQIDKIMSLIEKDKYNFIMYTMFDDELRRYLKQKAGAQEIPCIPVLSHVIREISCYLHIKKDPYISTNIGLDDEYFTRIDAINYTIAHDDGQNLWDIDQADIIILGVSRTSKSPTSIYLAYRGYRVVNIPLVHSINLSVDLSNMKNKLIVGLTIDIDRLIEIRRTRLVSMKNQNNYQYVDYEHVLMEIKETKRICVQNGWPIIDVTQKSVEEIAATIIQYFNKMQH</sequence>
<evidence type="ECO:0000255" key="1">
    <source>
        <dbReference type="HAMAP-Rule" id="MF_00921"/>
    </source>
</evidence>
<protein>
    <recommendedName>
        <fullName evidence="1">Putative pyruvate, phosphate dikinase regulatory protein</fullName>
        <shortName evidence="1">PPDK regulatory protein</shortName>
        <ecNumber evidence="1">2.7.11.32</ecNumber>
        <ecNumber evidence="1">2.7.4.27</ecNumber>
    </recommendedName>
</protein>
<name>PDRP_EHRCR</name>
<comment type="function">
    <text evidence="1">Bifunctional serine/threonine kinase and phosphorylase involved in the regulation of the pyruvate, phosphate dikinase (PPDK) by catalyzing its phosphorylation/dephosphorylation.</text>
</comment>
<comment type="catalytic activity">
    <reaction evidence="1">
        <text>N(tele)-phospho-L-histidyl/L-threonyl-[pyruvate, phosphate dikinase] + ADP = N(tele)-phospho-L-histidyl/O-phospho-L-threonyl-[pyruvate, phosphate dikinase] + AMP + H(+)</text>
        <dbReference type="Rhea" id="RHEA:43692"/>
        <dbReference type="Rhea" id="RHEA-COMP:10650"/>
        <dbReference type="Rhea" id="RHEA-COMP:10651"/>
        <dbReference type="ChEBI" id="CHEBI:15378"/>
        <dbReference type="ChEBI" id="CHEBI:30013"/>
        <dbReference type="ChEBI" id="CHEBI:61977"/>
        <dbReference type="ChEBI" id="CHEBI:83586"/>
        <dbReference type="ChEBI" id="CHEBI:456215"/>
        <dbReference type="ChEBI" id="CHEBI:456216"/>
        <dbReference type="EC" id="2.7.11.32"/>
    </reaction>
</comment>
<comment type="catalytic activity">
    <reaction evidence="1">
        <text>N(tele)-phospho-L-histidyl/O-phospho-L-threonyl-[pyruvate, phosphate dikinase] + phosphate + H(+) = N(tele)-phospho-L-histidyl/L-threonyl-[pyruvate, phosphate dikinase] + diphosphate</text>
        <dbReference type="Rhea" id="RHEA:43696"/>
        <dbReference type="Rhea" id="RHEA-COMP:10650"/>
        <dbReference type="Rhea" id="RHEA-COMP:10651"/>
        <dbReference type="ChEBI" id="CHEBI:15378"/>
        <dbReference type="ChEBI" id="CHEBI:30013"/>
        <dbReference type="ChEBI" id="CHEBI:33019"/>
        <dbReference type="ChEBI" id="CHEBI:43474"/>
        <dbReference type="ChEBI" id="CHEBI:61977"/>
        <dbReference type="ChEBI" id="CHEBI:83586"/>
        <dbReference type="EC" id="2.7.4.27"/>
    </reaction>
</comment>
<comment type="similarity">
    <text evidence="1">Belongs to the pyruvate, phosphate/water dikinase regulatory protein family. PDRP subfamily.</text>
</comment>
<organism>
    <name type="scientific">Ehrlichia chaffeensis (strain ATCC CRL-10679 / Arkansas)</name>
    <dbReference type="NCBI Taxonomy" id="205920"/>
    <lineage>
        <taxon>Bacteria</taxon>
        <taxon>Pseudomonadati</taxon>
        <taxon>Pseudomonadota</taxon>
        <taxon>Alphaproteobacteria</taxon>
        <taxon>Rickettsiales</taxon>
        <taxon>Anaplasmataceae</taxon>
        <taxon>Ehrlichia</taxon>
    </lineage>
</organism>
<keyword id="KW-0418">Kinase</keyword>
<keyword id="KW-0547">Nucleotide-binding</keyword>
<keyword id="KW-1185">Reference proteome</keyword>
<keyword id="KW-0723">Serine/threonine-protein kinase</keyword>
<keyword id="KW-0808">Transferase</keyword>
<gene>
    <name type="ordered locus">ECH_0895</name>
</gene>
<proteinExistence type="inferred from homology"/>